<feature type="chain" id="PRO_0000430146" description="Bifunctional nitrilase/nitrile hydratase NIT4A">
    <location>
        <begin position="1"/>
        <end position="349"/>
    </location>
</feature>
<feature type="domain" description="CN hydrolase" evidence="1">
    <location>
        <begin position="29"/>
        <end position="301"/>
    </location>
</feature>
<feature type="active site" description="Proton acceptor" evidence="1">
    <location>
        <position position="69"/>
    </location>
</feature>
<feature type="active site" evidence="1">
    <location>
        <position position="156"/>
    </location>
</feature>
<feature type="active site" description="Nucleophile" evidence="1 2">
    <location>
        <position position="190"/>
    </location>
</feature>
<comment type="function">
    <text evidence="3">Involved in the cyanide detoxification pathway. Has nitrilase and nitrile-hydratase activity in the ratio 4.0:1, producing both asparagine and aspartic acid from beta-cyano-L-alanine (Ala(CN)). Can also use 3-phenylpropionitrile as substrate, but not indole-3-acetonitrile.</text>
</comment>
<comment type="catalytic activity">
    <reaction evidence="3">
        <text>L-asparagine = 3-cyano-L-alanine + H2O</text>
        <dbReference type="Rhea" id="RHEA:15385"/>
        <dbReference type="ChEBI" id="CHEBI:15377"/>
        <dbReference type="ChEBI" id="CHEBI:58048"/>
        <dbReference type="ChEBI" id="CHEBI:77860"/>
        <dbReference type="EC" id="4.2.1.65"/>
    </reaction>
</comment>
<comment type="catalytic activity">
    <reaction evidence="3">
        <text>3-cyano-L-alanine + 2 H2O = L-aspartate + NH4(+)</text>
        <dbReference type="Rhea" id="RHEA:11188"/>
        <dbReference type="ChEBI" id="CHEBI:15377"/>
        <dbReference type="ChEBI" id="CHEBI:28938"/>
        <dbReference type="ChEBI" id="CHEBI:29991"/>
        <dbReference type="ChEBI" id="CHEBI:77860"/>
        <dbReference type="EC" id="3.5.5.4"/>
    </reaction>
</comment>
<comment type="biophysicochemical properties">
    <kinetics>
        <KM evidence="3">1.18 mM for Ala(CN)</KM>
        <Vmax evidence="3">477.7 nmol/sec/mg enzyme for the nitrilase activity</Vmax>
    </kinetics>
</comment>
<comment type="tissue specificity">
    <text evidence="3">Ubiquitous.</text>
</comment>
<comment type="similarity">
    <text evidence="4">Belongs to the carbon-nitrogen hydrolase superfamily. Nitrilase family.</text>
</comment>
<gene>
    <name type="primary">NIT4A</name>
</gene>
<accession>Q5QGZ8</accession>
<accession>Q6QDB7</accession>
<name>NRL4A_LUPAN</name>
<sequence length="349" mass="37762">MALVTTPTVNDGPLFAEVNMSSDFNAPTVRATVVQASTIFYDTPATLDKAERLLAEAASYGAQIVVFPEAFIGGYPRGSNFGVSIGNRTAKGKEDFRKYHSAAIDVPGPEVDRLAALAGKYKVYLVMGVIERDGYTLYCTVLFFGAQGRYLGKHRKLMPTALERIIWGFGDGSTIPVFETPIGKIGAAICWENKMPLLRTAMYAKGVEIYCAPTADSREVWQASMTHIALEGGCFVLSANQFCRRRDYPPPPEYVFEGTEENLTPDSVVCAGGSVIISPSGAVLAGPSYEGEALISADLDLGEIARAKFDFDVVGHYSRPEVLSLVVKDHPTNPVTFTSASTKIEDKTK</sequence>
<organism>
    <name type="scientific">Lupinus angustifolius</name>
    <name type="common">Narrow-leaved blue lupine</name>
    <dbReference type="NCBI Taxonomy" id="3871"/>
    <lineage>
        <taxon>Eukaryota</taxon>
        <taxon>Viridiplantae</taxon>
        <taxon>Streptophyta</taxon>
        <taxon>Embryophyta</taxon>
        <taxon>Tracheophyta</taxon>
        <taxon>Spermatophyta</taxon>
        <taxon>Magnoliopsida</taxon>
        <taxon>eudicotyledons</taxon>
        <taxon>Gunneridae</taxon>
        <taxon>Pentapetalae</taxon>
        <taxon>rosids</taxon>
        <taxon>fabids</taxon>
        <taxon>Fabales</taxon>
        <taxon>Fabaceae</taxon>
        <taxon>Papilionoideae</taxon>
        <taxon>50 kb inversion clade</taxon>
        <taxon>genistoids sensu lato</taxon>
        <taxon>core genistoids</taxon>
        <taxon>Genisteae</taxon>
        <taxon>Lupinus</taxon>
    </lineage>
</organism>
<protein>
    <recommendedName>
        <fullName>Bifunctional nitrilase/nitrile hydratase NIT4A</fullName>
        <shortName>LaNIT4A</shortName>
        <ecNumber>3.5.5.4</ecNumber>
        <ecNumber>4.2.1.65</ecNumber>
    </recommendedName>
    <alternativeName>
        <fullName>3-cyanoalanine hydratase</fullName>
    </alternativeName>
    <alternativeName>
        <fullName>Cyanoalanine nitrilase A</fullName>
    </alternativeName>
</protein>
<proteinExistence type="evidence at protein level"/>
<reference key="1">
    <citation type="journal article" date="2006" name="Plant Mol. Biol.">
        <title>Cyanide metabolism in higher plants: cyanoalanine hydratase is a NIT4 homolog.</title>
        <authorList>
            <person name="Piotrowski M."/>
            <person name="Volmer J.J."/>
        </authorList>
    </citation>
    <scope>NUCLEOTIDE SEQUENCE [GENOMIC DNA / MRNA]</scope>
    <scope>FUNCTION</scope>
    <scope>CATALYTIC ACTIVITY</scope>
    <scope>BIOPHYSICOCHEMICAL PROPERTIES</scope>
    <scope>IDENTIFICATION BY MASS SPECTROMETRY</scope>
    <scope>TISSUE SPECIFICITY</scope>
    <source>
        <strain>cv. Azuro</strain>
    </source>
</reference>
<reference key="2">
    <citation type="journal article" date="2014" name="PLoS ONE">
        <title>Finding sequences for over 270 orphan enzymes.</title>
        <authorList>
            <person name="Shearer A.G."/>
            <person name="Altman T."/>
            <person name="Rhee C.D."/>
        </authorList>
    </citation>
    <scope>IDENTIFICATION</scope>
</reference>
<dbReference type="EC" id="3.5.5.4"/>
<dbReference type="EC" id="4.2.1.65"/>
<dbReference type="EMBL" id="AY547301">
    <property type="protein sequence ID" value="AAT36331.1"/>
    <property type="molecule type" value="mRNA"/>
</dbReference>
<dbReference type="EMBL" id="DQ241759">
    <property type="protein sequence ID" value="ABB51979.1"/>
    <property type="molecule type" value="Genomic_DNA"/>
</dbReference>
<dbReference type="EMBL" id="AY547303">
    <property type="protein sequence ID" value="AAS55944.1"/>
    <property type="molecule type" value="Genomic_DNA"/>
</dbReference>
<dbReference type="RefSeq" id="XP_019448859.1">
    <property type="nucleotide sequence ID" value="XM_019593314.1"/>
</dbReference>
<dbReference type="SMR" id="Q5QGZ8"/>
<dbReference type="EnsemblPlants" id="OIW08474">
    <property type="protein sequence ID" value="OIW08474"/>
    <property type="gene ID" value="TanjilG_03150"/>
</dbReference>
<dbReference type="GeneID" id="109351736"/>
<dbReference type="Gramene" id="OIW08474">
    <property type="protein sequence ID" value="OIW08474"/>
    <property type="gene ID" value="TanjilG_03150"/>
</dbReference>
<dbReference type="KEGG" id="lang:109351736"/>
<dbReference type="OrthoDB" id="10250282at2759"/>
<dbReference type="BioCyc" id="MetaCyc:MONOMER-17621"/>
<dbReference type="BRENDA" id="3.5.5.4">
    <property type="organism ID" value="3090"/>
</dbReference>
<dbReference type="BRENDA" id="4.2.1.65">
    <property type="organism ID" value="3090"/>
</dbReference>
<dbReference type="SABIO-RK" id="Q5QGZ8"/>
<dbReference type="GO" id="GO:0047558">
    <property type="term" value="F:3-cyanoalanine hydratase activity"/>
    <property type="evidence" value="ECO:0000314"/>
    <property type="project" value="UniProtKB"/>
</dbReference>
<dbReference type="GO" id="GO:0047427">
    <property type="term" value="F:cyanoalanine nitrilase activity"/>
    <property type="evidence" value="ECO:0000314"/>
    <property type="project" value="UniProtKB"/>
</dbReference>
<dbReference type="GO" id="GO:0018822">
    <property type="term" value="F:nitrile hydratase activity"/>
    <property type="evidence" value="ECO:0007669"/>
    <property type="project" value="TreeGrafter"/>
</dbReference>
<dbReference type="GO" id="GO:0019500">
    <property type="term" value="P:cyanide catabolic process"/>
    <property type="evidence" value="ECO:0000314"/>
    <property type="project" value="UniProtKB"/>
</dbReference>
<dbReference type="GO" id="GO:0051410">
    <property type="term" value="P:detoxification of nitrogen compound"/>
    <property type="evidence" value="ECO:0000314"/>
    <property type="project" value="UniProtKB"/>
</dbReference>
<dbReference type="CDD" id="cd07564">
    <property type="entry name" value="nitrilases_CHs"/>
    <property type="match status" value="1"/>
</dbReference>
<dbReference type="FunFam" id="3.60.110.10:FF:000006">
    <property type="entry name" value="Bifunctional nitrilase/nitrile hydratase NIT4B"/>
    <property type="match status" value="1"/>
</dbReference>
<dbReference type="Gene3D" id="3.60.110.10">
    <property type="entry name" value="Carbon-nitrogen hydrolase"/>
    <property type="match status" value="1"/>
</dbReference>
<dbReference type="InterPro" id="IPR003010">
    <property type="entry name" value="C-N_Hydrolase"/>
</dbReference>
<dbReference type="InterPro" id="IPR036526">
    <property type="entry name" value="C-N_Hydrolase_sf"/>
</dbReference>
<dbReference type="InterPro" id="IPR000132">
    <property type="entry name" value="Nitrilase/CN_hydratase_CS"/>
</dbReference>
<dbReference type="InterPro" id="IPR044149">
    <property type="entry name" value="Nitrilases_CHs"/>
</dbReference>
<dbReference type="PANTHER" id="PTHR46044:SF1">
    <property type="entry name" value="CN HYDROLASE DOMAIN-CONTAINING PROTEIN"/>
    <property type="match status" value="1"/>
</dbReference>
<dbReference type="PANTHER" id="PTHR46044">
    <property type="entry name" value="NITRILASE"/>
    <property type="match status" value="1"/>
</dbReference>
<dbReference type="Pfam" id="PF00795">
    <property type="entry name" value="CN_hydrolase"/>
    <property type="match status" value="1"/>
</dbReference>
<dbReference type="SUPFAM" id="SSF56317">
    <property type="entry name" value="Carbon-nitrogen hydrolase"/>
    <property type="match status" value="1"/>
</dbReference>
<dbReference type="PROSITE" id="PS50263">
    <property type="entry name" value="CN_HYDROLASE"/>
    <property type="match status" value="1"/>
</dbReference>
<dbReference type="PROSITE" id="PS00920">
    <property type="entry name" value="NITRIL_CHT_1"/>
    <property type="match status" value="1"/>
</dbReference>
<dbReference type="PROSITE" id="PS00921">
    <property type="entry name" value="NITRIL_CHT_2"/>
    <property type="match status" value="1"/>
</dbReference>
<evidence type="ECO:0000255" key="1">
    <source>
        <dbReference type="PROSITE-ProRule" id="PRU00054"/>
    </source>
</evidence>
<evidence type="ECO:0000255" key="2">
    <source>
        <dbReference type="PROSITE-ProRule" id="PRU10105"/>
    </source>
</evidence>
<evidence type="ECO:0000269" key="3">
    <source>
    </source>
</evidence>
<evidence type="ECO:0000305" key="4"/>
<keyword id="KW-0378">Hydrolase</keyword>
<keyword id="KW-0456">Lyase</keyword>